<comment type="function">
    <text evidence="1">Catalyzes the formation of 2-amino-5-formylamino-6-ribofuranosylamino-4(3H)-pyrimidinone ribonucleotide monophosphate and inorganic phosphate from GTP. Also has an independent pyrophosphate phosphohydrolase activity.</text>
</comment>
<comment type="catalytic activity">
    <reaction evidence="1">
        <text>GTP + 3 H2O = 2-amino-5-formylamino-6-(5-phospho-D-ribosylamino)pyrimidin-4(3H)-one + 2 phosphate + 2 H(+)</text>
        <dbReference type="Rhea" id="RHEA:22468"/>
        <dbReference type="ChEBI" id="CHEBI:15377"/>
        <dbReference type="ChEBI" id="CHEBI:15378"/>
        <dbReference type="ChEBI" id="CHEBI:37565"/>
        <dbReference type="ChEBI" id="CHEBI:43474"/>
        <dbReference type="ChEBI" id="CHEBI:57258"/>
        <dbReference type="EC" id="3.5.4.29"/>
    </reaction>
</comment>
<comment type="similarity">
    <text evidence="1">Belongs to the archaeal-type GTP cyclohydrolase family.</text>
</comment>
<accession>Q8ZU20</accession>
<gene>
    <name evidence="1" type="primary">gch3</name>
    <name type="ordered locus">PAE2984</name>
</gene>
<dbReference type="EC" id="3.5.4.29" evidence="1"/>
<dbReference type="EMBL" id="AE009441">
    <property type="protein sequence ID" value="AAL64588.1"/>
    <property type="molecule type" value="Genomic_DNA"/>
</dbReference>
<dbReference type="RefSeq" id="WP_011009056.1">
    <property type="nucleotide sequence ID" value="NC_003364.1"/>
</dbReference>
<dbReference type="SMR" id="Q8ZU20"/>
<dbReference type="FunCoup" id="Q8ZU20">
    <property type="interactions" value="8"/>
</dbReference>
<dbReference type="STRING" id="178306.PAE2984"/>
<dbReference type="EnsemblBacteria" id="AAL64588">
    <property type="protein sequence ID" value="AAL64588"/>
    <property type="gene ID" value="PAE2984"/>
</dbReference>
<dbReference type="GeneID" id="1463753"/>
<dbReference type="KEGG" id="pai:PAE2984"/>
<dbReference type="PATRIC" id="fig|178306.9.peg.2239"/>
<dbReference type="eggNOG" id="arCOG04202">
    <property type="taxonomic scope" value="Archaea"/>
</dbReference>
<dbReference type="HOGENOM" id="CLU_080076_0_0_2"/>
<dbReference type="InParanoid" id="Q8ZU20"/>
<dbReference type="Proteomes" id="UP000002439">
    <property type="component" value="Chromosome"/>
</dbReference>
<dbReference type="GO" id="GO:0005525">
    <property type="term" value="F:GTP binding"/>
    <property type="evidence" value="ECO:0007669"/>
    <property type="project" value="UniProtKB-KW"/>
</dbReference>
<dbReference type="GO" id="GO:0043740">
    <property type="term" value="F:GTP cyclohydrolase IIa activity"/>
    <property type="evidence" value="ECO:0007669"/>
    <property type="project" value="UniProtKB-EC"/>
</dbReference>
<dbReference type="GO" id="GO:0009058">
    <property type="term" value="P:biosynthetic process"/>
    <property type="evidence" value="ECO:0007669"/>
    <property type="project" value="InterPro"/>
</dbReference>
<dbReference type="Gene3D" id="3.30.70.270">
    <property type="match status" value="1"/>
</dbReference>
<dbReference type="Gene3D" id="3.30.70.1230">
    <property type="entry name" value="Nucleotide cyclase"/>
    <property type="match status" value="1"/>
</dbReference>
<dbReference type="HAMAP" id="MF_00608">
    <property type="entry name" value="GTP_cyclohydro_3"/>
    <property type="match status" value="1"/>
</dbReference>
<dbReference type="InterPro" id="IPR007839">
    <property type="entry name" value="GTP_CycHdrlase_3"/>
</dbReference>
<dbReference type="InterPro" id="IPR029787">
    <property type="entry name" value="Nucleotide_cyclase"/>
</dbReference>
<dbReference type="InterPro" id="IPR043128">
    <property type="entry name" value="Rev_trsase/Diguanyl_cyclase"/>
</dbReference>
<dbReference type="PANTHER" id="PTHR42202">
    <property type="entry name" value="GTP CYCLOHYDROLASE III"/>
    <property type="match status" value="1"/>
</dbReference>
<dbReference type="PANTHER" id="PTHR42202:SF1">
    <property type="entry name" value="GTP CYCLOHYDROLASE III"/>
    <property type="match status" value="1"/>
</dbReference>
<dbReference type="Pfam" id="PF05165">
    <property type="entry name" value="GCH_III"/>
    <property type="match status" value="2"/>
</dbReference>
<dbReference type="PIRSF" id="PIRSF009265">
    <property type="entry name" value="GTP_cyclohydro_3"/>
    <property type="match status" value="1"/>
</dbReference>
<dbReference type="SUPFAM" id="SSF55073">
    <property type="entry name" value="Nucleotide cyclase"/>
    <property type="match status" value="1"/>
</dbReference>
<proteinExistence type="inferred from homology"/>
<sequence>MHKITLIRLRGYREWTESLGPRREHIIQTVQAKIHSALWKYFTSIGALPHHLRYDFSLALTTNIETGRVGEVVAKIKRISPVDVEFCEGVGRTPREAYENCGATPGESAGVSVVAHMDVVDSTAATNKNGPLYVYRLIQRTISTIDSGCENLGCLAFYLGGDNIMLLLPNVDAIYQVLRDVELSVRVGVGVAKKPYNAFVKATRGLDYMRVKGRVGVKVVK</sequence>
<protein>
    <recommendedName>
        <fullName evidence="1">GTP cyclohydrolase III</fullName>
        <ecNumber evidence="1">3.5.4.29</ecNumber>
    </recommendedName>
</protein>
<keyword id="KW-0342">GTP-binding</keyword>
<keyword id="KW-0378">Hydrolase</keyword>
<keyword id="KW-0547">Nucleotide-binding</keyword>
<keyword id="KW-1185">Reference proteome</keyword>
<name>GCH3_PYRAE</name>
<organism>
    <name type="scientific">Pyrobaculum aerophilum (strain ATCC 51768 / DSM 7523 / JCM 9630 / CIP 104966 / NBRC 100827 / IM2)</name>
    <dbReference type="NCBI Taxonomy" id="178306"/>
    <lineage>
        <taxon>Archaea</taxon>
        <taxon>Thermoproteota</taxon>
        <taxon>Thermoprotei</taxon>
        <taxon>Thermoproteales</taxon>
        <taxon>Thermoproteaceae</taxon>
        <taxon>Pyrobaculum</taxon>
    </lineage>
</organism>
<feature type="chain" id="PRO_0000145757" description="GTP cyclohydrolase III">
    <location>
        <begin position="1"/>
        <end position="221"/>
    </location>
</feature>
<reference key="1">
    <citation type="journal article" date="2002" name="Proc. Natl. Acad. Sci. U.S.A.">
        <title>Genome sequence of the hyperthermophilic crenarchaeon Pyrobaculum aerophilum.</title>
        <authorList>
            <person name="Fitz-Gibbon S.T."/>
            <person name="Ladner H."/>
            <person name="Kim U.-J."/>
            <person name="Stetter K.O."/>
            <person name="Simon M.I."/>
            <person name="Miller J.H."/>
        </authorList>
    </citation>
    <scope>NUCLEOTIDE SEQUENCE [LARGE SCALE GENOMIC DNA]</scope>
    <source>
        <strain>ATCC 51768 / DSM 7523 / JCM 9630 / CIP 104966 / NBRC 100827 / IM2</strain>
    </source>
</reference>
<evidence type="ECO:0000255" key="1">
    <source>
        <dbReference type="HAMAP-Rule" id="MF_00608"/>
    </source>
</evidence>